<name>DAPB_STRSV</name>
<dbReference type="EC" id="1.17.1.8" evidence="1"/>
<dbReference type="EMBL" id="CP000387">
    <property type="protein sequence ID" value="ABN44498.1"/>
    <property type="molecule type" value="Genomic_DNA"/>
</dbReference>
<dbReference type="RefSeq" id="WP_002897644.1">
    <property type="nucleotide sequence ID" value="NC_009009.1"/>
</dbReference>
<dbReference type="RefSeq" id="YP_001035048.1">
    <property type="nucleotide sequence ID" value="NC_009009.1"/>
</dbReference>
<dbReference type="SMR" id="A3CMU3"/>
<dbReference type="STRING" id="388919.SSA_1085"/>
<dbReference type="KEGG" id="ssa:SSA_1085"/>
<dbReference type="PATRIC" id="fig|388919.9.peg.1032"/>
<dbReference type="eggNOG" id="COG0289">
    <property type="taxonomic scope" value="Bacteria"/>
</dbReference>
<dbReference type="HOGENOM" id="CLU_047479_0_1_9"/>
<dbReference type="OrthoDB" id="9790352at2"/>
<dbReference type="UniPathway" id="UPA00034">
    <property type="reaction ID" value="UER00018"/>
</dbReference>
<dbReference type="Proteomes" id="UP000002148">
    <property type="component" value="Chromosome"/>
</dbReference>
<dbReference type="GO" id="GO:0005829">
    <property type="term" value="C:cytosol"/>
    <property type="evidence" value="ECO:0007669"/>
    <property type="project" value="TreeGrafter"/>
</dbReference>
<dbReference type="GO" id="GO:0008839">
    <property type="term" value="F:4-hydroxy-tetrahydrodipicolinate reductase"/>
    <property type="evidence" value="ECO:0007669"/>
    <property type="project" value="UniProtKB-EC"/>
</dbReference>
<dbReference type="GO" id="GO:0051287">
    <property type="term" value="F:NAD binding"/>
    <property type="evidence" value="ECO:0007669"/>
    <property type="project" value="UniProtKB-UniRule"/>
</dbReference>
<dbReference type="GO" id="GO:0050661">
    <property type="term" value="F:NADP binding"/>
    <property type="evidence" value="ECO:0007669"/>
    <property type="project" value="UniProtKB-UniRule"/>
</dbReference>
<dbReference type="GO" id="GO:0016726">
    <property type="term" value="F:oxidoreductase activity, acting on CH or CH2 groups, NAD or NADP as acceptor"/>
    <property type="evidence" value="ECO:0007669"/>
    <property type="project" value="UniProtKB-UniRule"/>
</dbReference>
<dbReference type="GO" id="GO:0019877">
    <property type="term" value="P:diaminopimelate biosynthetic process"/>
    <property type="evidence" value="ECO:0007669"/>
    <property type="project" value="UniProtKB-UniRule"/>
</dbReference>
<dbReference type="GO" id="GO:0009089">
    <property type="term" value="P:lysine biosynthetic process via diaminopimelate"/>
    <property type="evidence" value="ECO:0007669"/>
    <property type="project" value="UniProtKB-UniRule"/>
</dbReference>
<dbReference type="CDD" id="cd02274">
    <property type="entry name" value="DHDPR_N"/>
    <property type="match status" value="1"/>
</dbReference>
<dbReference type="FunFam" id="3.30.360.10:FF:000009">
    <property type="entry name" value="4-hydroxy-tetrahydrodipicolinate reductase"/>
    <property type="match status" value="1"/>
</dbReference>
<dbReference type="Gene3D" id="3.30.360.10">
    <property type="entry name" value="Dihydrodipicolinate Reductase, domain 2"/>
    <property type="match status" value="1"/>
</dbReference>
<dbReference type="Gene3D" id="3.40.50.720">
    <property type="entry name" value="NAD(P)-binding Rossmann-like Domain"/>
    <property type="match status" value="1"/>
</dbReference>
<dbReference type="HAMAP" id="MF_00102">
    <property type="entry name" value="DapB"/>
    <property type="match status" value="1"/>
</dbReference>
<dbReference type="InterPro" id="IPR022663">
    <property type="entry name" value="DapB_C"/>
</dbReference>
<dbReference type="InterPro" id="IPR000846">
    <property type="entry name" value="DapB_N"/>
</dbReference>
<dbReference type="InterPro" id="IPR022664">
    <property type="entry name" value="DapB_N_CS"/>
</dbReference>
<dbReference type="InterPro" id="IPR023940">
    <property type="entry name" value="DHDPR_bac"/>
</dbReference>
<dbReference type="InterPro" id="IPR036291">
    <property type="entry name" value="NAD(P)-bd_dom_sf"/>
</dbReference>
<dbReference type="NCBIfam" id="TIGR00036">
    <property type="entry name" value="dapB"/>
    <property type="match status" value="1"/>
</dbReference>
<dbReference type="PANTHER" id="PTHR20836:SF0">
    <property type="entry name" value="4-HYDROXY-TETRAHYDRODIPICOLINATE REDUCTASE 1, CHLOROPLASTIC-RELATED"/>
    <property type="match status" value="1"/>
</dbReference>
<dbReference type="PANTHER" id="PTHR20836">
    <property type="entry name" value="DIHYDRODIPICOLINATE REDUCTASE"/>
    <property type="match status" value="1"/>
</dbReference>
<dbReference type="Pfam" id="PF05173">
    <property type="entry name" value="DapB_C"/>
    <property type="match status" value="1"/>
</dbReference>
<dbReference type="Pfam" id="PF01113">
    <property type="entry name" value="DapB_N"/>
    <property type="match status" value="1"/>
</dbReference>
<dbReference type="PIRSF" id="PIRSF000161">
    <property type="entry name" value="DHPR"/>
    <property type="match status" value="1"/>
</dbReference>
<dbReference type="SUPFAM" id="SSF55347">
    <property type="entry name" value="Glyceraldehyde-3-phosphate dehydrogenase-like, C-terminal domain"/>
    <property type="match status" value="1"/>
</dbReference>
<dbReference type="SUPFAM" id="SSF51735">
    <property type="entry name" value="NAD(P)-binding Rossmann-fold domains"/>
    <property type="match status" value="1"/>
</dbReference>
<dbReference type="PROSITE" id="PS01298">
    <property type="entry name" value="DAPB"/>
    <property type="match status" value="1"/>
</dbReference>
<protein>
    <recommendedName>
        <fullName evidence="1">4-hydroxy-tetrahydrodipicolinate reductase</fullName>
        <shortName evidence="1">HTPA reductase</shortName>
        <ecNumber evidence="1">1.17.1.8</ecNumber>
    </recommendedName>
</protein>
<sequence>MSIKVIIAGFKGKMGQAAYKMVTEDSELELVGLLDPFTDEKEVAGVPVFNAKEELAGLEAHVWVDFTTPKVAYDNTRFALEQGFCPVVGTTGFTPEQLEELITLSREKKLGGLIAPNFALGAVLLMQFAAQAAKYFANVEIIELHHDQKKDAPSGTAIKTAELISQVRPSKQQGAADEEESIVGARGADFDGMRIHSVRLPGLVAHQEVIFGSQGEGLTMRHDSYDRASFMTGVNLAIKEVVKRSELVYGLEHLL</sequence>
<accession>A3CMU3</accession>
<proteinExistence type="inferred from homology"/>
<keyword id="KW-0028">Amino-acid biosynthesis</keyword>
<keyword id="KW-0963">Cytoplasm</keyword>
<keyword id="KW-0220">Diaminopimelate biosynthesis</keyword>
<keyword id="KW-0457">Lysine biosynthesis</keyword>
<keyword id="KW-0520">NAD</keyword>
<keyword id="KW-0521">NADP</keyword>
<keyword id="KW-0560">Oxidoreductase</keyword>
<keyword id="KW-1185">Reference proteome</keyword>
<comment type="function">
    <text evidence="1">Catalyzes the conversion of 4-hydroxy-tetrahydrodipicolinate (HTPA) to tetrahydrodipicolinate.</text>
</comment>
<comment type="catalytic activity">
    <reaction evidence="1">
        <text>(S)-2,3,4,5-tetrahydrodipicolinate + NAD(+) + H2O = (2S,4S)-4-hydroxy-2,3,4,5-tetrahydrodipicolinate + NADH + H(+)</text>
        <dbReference type="Rhea" id="RHEA:35323"/>
        <dbReference type="ChEBI" id="CHEBI:15377"/>
        <dbReference type="ChEBI" id="CHEBI:15378"/>
        <dbReference type="ChEBI" id="CHEBI:16845"/>
        <dbReference type="ChEBI" id="CHEBI:57540"/>
        <dbReference type="ChEBI" id="CHEBI:57945"/>
        <dbReference type="ChEBI" id="CHEBI:67139"/>
        <dbReference type="EC" id="1.17.1.8"/>
    </reaction>
</comment>
<comment type="catalytic activity">
    <reaction evidence="1">
        <text>(S)-2,3,4,5-tetrahydrodipicolinate + NADP(+) + H2O = (2S,4S)-4-hydroxy-2,3,4,5-tetrahydrodipicolinate + NADPH + H(+)</text>
        <dbReference type="Rhea" id="RHEA:35331"/>
        <dbReference type="ChEBI" id="CHEBI:15377"/>
        <dbReference type="ChEBI" id="CHEBI:15378"/>
        <dbReference type="ChEBI" id="CHEBI:16845"/>
        <dbReference type="ChEBI" id="CHEBI:57783"/>
        <dbReference type="ChEBI" id="CHEBI:58349"/>
        <dbReference type="ChEBI" id="CHEBI:67139"/>
        <dbReference type="EC" id="1.17.1.8"/>
    </reaction>
</comment>
<comment type="pathway">
    <text evidence="1">Amino-acid biosynthesis; L-lysine biosynthesis via DAP pathway; (S)-tetrahydrodipicolinate from L-aspartate: step 4/4.</text>
</comment>
<comment type="subcellular location">
    <subcellularLocation>
        <location evidence="1">Cytoplasm</location>
    </subcellularLocation>
</comment>
<comment type="similarity">
    <text evidence="1">Belongs to the DapB family.</text>
</comment>
<comment type="caution">
    <text evidence="2">Was originally thought to be a dihydrodipicolinate reductase (DHDPR), catalyzing the conversion of dihydrodipicolinate to tetrahydrodipicolinate. However, it was shown in E.coli that the substrate of the enzymatic reaction is not dihydrodipicolinate (DHDP) but in fact (2S,4S)-4-hydroxy-2,3,4,5-tetrahydrodipicolinic acid (HTPA), the product released by the DapA-catalyzed reaction.</text>
</comment>
<reference key="1">
    <citation type="journal article" date="2007" name="J. Bacteriol.">
        <title>Genome of the opportunistic pathogen Streptococcus sanguinis.</title>
        <authorList>
            <person name="Xu P."/>
            <person name="Alves J.M."/>
            <person name="Kitten T."/>
            <person name="Brown A."/>
            <person name="Chen Z."/>
            <person name="Ozaki L.S."/>
            <person name="Manque P."/>
            <person name="Ge X."/>
            <person name="Serrano M.G."/>
            <person name="Puiu D."/>
            <person name="Hendricks S."/>
            <person name="Wang Y."/>
            <person name="Chaplin M.D."/>
            <person name="Akan D."/>
            <person name="Paik S."/>
            <person name="Peterson D.L."/>
            <person name="Macrina F.L."/>
            <person name="Buck G.A."/>
        </authorList>
    </citation>
    <scope>NUCLEOTIDE SEQUENCE [LARGE SCALE GENOMIC DNA]</scope>
    <source>
        <strain>SK36</strain>
    </source>
</reference>
<gene>
    <name evidence="1" type="primary">dapB</name>
    <name type="ordered locus">SSA_1085</name>
</gene>
<evidence type="ECO:0000255" key="1">
    <source>
        <dbReference type="HAMAP-Rule" id="MF_00102"/>
    </source>
</evidence>
<evidence type="ECO:0000305" key="2"/>
<feature type="chain" id="PRO_1000008647" description="4-hydroxy-tetrahydrodipicolinate reductase">
    <location>
        <begin position="1"/>
        <end position="255"/>
    </location>
</feature>
<feature type="active site" description="Proton donor/acceptor" evidence="1">
    <location>
        <position position="145"/>
    </location>
</feature>
<feature type="active site" description="Proton donor" evidence="1">
    <location>
        <position position="149"/>
    </location>
</feature>
<feature type="binding site" evidence="1">
    <location>
        <begin position="9"/>
        <end position="14"/>
    </location>
    <ligand>
        <name>NAD(+)</name>
        <dbReference type="ChEBI" id="CHEBI:57540"/>
    </ligand>
</feature>
<feature type="binding site" evidence="1">
    <location>
        <begin position="89"/>
        <end position="91"/>
    </location>
    <ligand>
        <name>NAD(+)</name>
        <dbReference type="ChEBI" id="CHEBI:57540"/>
    </ligand>
</feature>
<feature type="binding site" evidence="1">
    <location>
        <begin position="115"/>
        <end position="118"/>
    </location>
    <ligand>
        <name>NAD(+)</name>
        <dbReference type="ChEBI" id="CHEBI:57540"/>
    </ligand>
</feature>
<feature type="binding site" evidence="1">
    <location>
        <position position="146"/>
    </location>
    <ligand>
        <name>(S)-2,3,4,5-tetrahydrodipicolinate</name>
        <dbReference type="ChEBI" id="CHEBI:16845"/>
    </ligand>
</feature>
<feature type="binding site" evidence="1">
    <location>
        <begin position="155"/>
        <end position="156"/>
    </location>
    <ligand>
        <name>(S)-2,3,4,5-tetrahydrodipicolinate</name>
        <dbReference type="ChEBI" id="CHEBI:16845"/>
    </ligand>
</feature>
<organism>
    <name type="scientific">Streptococcus sanguinis (strain SK36)</name>
    <dbReference type="NCBI Taxonomy" id="388919"/>
    <lineage>
        <taxon>Bacteria</taxon>
        <taxon>Bacillati</taxon>
        <taxon>Bacillota</taxon>
        <taxon>Bacilli</taxon>
        <taxon>Lactobacillales</taxon>
        <taxon>Streptococcaceae</taxon>
        <taxon>Streptococcus</taxon>
    </lineage>
</organism>